<feature type="chain" id="PRO_0000406798" description="Alkaline nuclease">
    <location>
        <begin position="1"/>
        <end position="520"/>
    </location>
</feature>
<feature type="site" description="Required for function" evidence="1">
    <location>
        <position position="176"/>
    </location>
</feature>
<feature type="site" description="Required for function" evidence="1">
    <location>
        <position position="232"/>
    </location>
</feature>
<feature type="site" description="Required for function" evidence="1">
    <location>
        <position position="252"/>
    </location>
</feature>
<feature type="site" description="Required for function" evidence="1">
    <location>
        <position position="254"/>
    </location>
</feature>
<reference key="1">
    <citation type="journal article" date="2006" name="J. Virol.">
        <title>Psittacid herpesvirus 1 and infectious laryngotracheitis virus: Comparative genome sequence analysis of two avian alphaherpesviruses.</title>
        <authorList>
            <person name="Thureen D.R."/>
            <person name="Keeler C.L. Jr."/>
        </authorList>
    </citation>
    <scope>NUCLEOTIDE SEQUENCE [LARGE SCALE GENOMIC DNA]</scope>
</reference>
<comment type="function">
    <text evidence="1">Plays a role in processing non linear or branched viral DNA intermediates in order to promote the production of mature packaged unit-length linear progeny viral DNA molecules. Exhibits endonuclease and exonuclease activities and accepts both double-stranded and single-stranded DNA as substrate. Exonuclease digestion of DNA is in the 5'-&gt; 3' direction and the products are 5'-monophosphate nucleosides. Additionally, forms a recombinase with the major DNA-binding protein, which displays strand exchange activity.</text>
</comment>
<comment type="subunit">
    <text evidence="1">Interacts with major DNA-binding protein; this interaction increases the nuclease processivity of the alkaline exonuclease.</text>
</comment>
<comment type="subcellular location">
    <subcellularLocation>
        <location evidence="1">Host nucleus</location>
    </subcellularLocation>
    <subcellularLocation>
        <location evidence="1">Host cytoplasm</location>
    </subcellularLocation>
</comment>
<comment type="similarity">
    <text evidence="1">Belongs to the herpesviridae alkaline nuclease family.</text>
</comment>
<organism>
    <name type="scientific">Psittacid herpesvirus 1 (isolate Amazon parrot/-/97-0001/1997)</name>
    <name type="common">PsHV-1</name>
    <name type="synonym">Pacheco's disease virus</name>
    <dbReference type="NCBI Taxonomy" id="670426"/>
    <lineage>
        <taxon>Viruses</taxon>
        <taxon>Duplodnaviria</taxon>
        <taxon>Heunggongvirae</taxon>
        <taxon>Peploviricota</taxon>
        <taxon>Herviviricetes</taxon>
        <taxon>Herpesvirales</taxon>
        <taxon>Orthoherpesviridae</taxon>
        <taxon>Alphaherpesvirinae</taxon>
        <taxon>Iltovirus</taxon>
        <taxon>Iltovirus psittacidalpha1</taxon>
        <taxon>Psittacid alphaherpesvirus 1</taxon>
    </lineage>
</organism>
<protein>
    <recommendedName>
        <fullName evidence="1">Alkaline nuclease</fullName>
        <ecNumber evidence="1">3.1.-.-</ecNumber>
    </recommendedName>
</protein>
<organismHost>
    <name type="scientific">Amazona oratrix</name>
    <name type="common">yellow-headed parrot</name>
    <dbReference type="NCBI Taxonomy" id="152276"/>
</organismHost>
<dbReference type="EC" id="3.1.-.-" evidence="1"/>
<dbReference type="EMBL" id="AY372243">
    <property type="protein sequence ID" value="AAQ73734.1"/>
    <property type="molecule type" value="Genomic_DNA"/>
</dbReference>
<dbReference type="RefSeq" id="NP_944428.1">
    <property type="nucleotide sequence ID" value="NC_005264.1"/>
</dbReference>
<dbReference type="SMR" id="Q6UDH6"/>
<dbReference type="GeneID" id="2657012"/>
<dbReference type="KEGG" id="vg:2657012"/>
<dbReference type="Proteomes" id="UP000006840">
    <property type="component" value="Segment"/>
</dbReference>
<dbReference type="GO" id="GO:0030430">
    <property type="term" value="C:host cell cytoplasm"/>
    <property type="evidence" value="ECO:0007669"/>
    <property type="project" value="UniProtKB-SubCell"/>
</dbReference>
<dbReference type="GO" id="GO:0042025">
    <property type="term" value="C:host cell nucleus"/>
    <property type="evidence" value="ECO:0007669"/>
    <property type="project" value="UniProtKB-SubCell"/>
</dbReference>
<dbReference type="GO" id="GO:0003677">
    <property type="term" value="F:DNA binding"/>
    <property type="evidence" value="ECO:0007669"/>
    <property type="project" value="InterPro"/>
</dbReference>
<dbReference type="GO" id="GO:0004519">
    <property type="term" value="F:endonuclease activity"/>
    <property type="evidence" value="ECO:0007669"/>
    <property type="project" value="UniProtKB-KW"/>
</dbReference>
<dbReference type="GO" id="GO:0004527">
    <property type="term" value="F:exonuclease activity"/>
    <property type="evidence" value="ECO:0007669"/>
    <property type="project" value="UniProtKB-KW"/>
</dbReference>
<dbReference type="Gene3D" id="3.90.320.10">
    <property type="match status" value="1"/>
</dbReference>
<dbReference type="HAMAP" id="MF_04009">
    <property type="entry name" value="HSV_AN"/>
    <property type="match status" value="1"/>
</dbReference>
<dbReference type="InterPro" id="IPR001616">
    <property type="entry name" value="Herpes_alk_exo"/>
</dbReference>
<dbReference type="InterPro" id="IPR011604">
    <property type="entry name" value="PDDEXK-like_dom_sf"/>
</dbReference>
<dbReference type="InterPro" id="IPR011335">
    <property type="entry name" value="Restrct_endonuc-II-like"/>
</dbReference>
<dbReference type="InterPro" id="IPR034720">
    <property type="entry name" value="Viral_alk_exo"/>
</dbReference>
<dbReference type="Pfam" id="PF01771">
    <property type="entry name" value="Viral_alk_exo"/>
    <property type="match status" value="1"/>
</dbReference>
<dbReference type="PRINTS" id="PR00924">
    <property type="entry name" value="ALKEXNUCLASE"/>
</dbReference>
<dbReference type="SUPFAM" id="SSF52980">
    <property type="entry name" value="Restriction endonuclease-like"/>
    <property type="match status" value="1"/>
</dbReference>
<proteinExistence type="inferred from homology"/>
<gene>
    <name type="primary">UL12</name>
</gene>
<keyword id="KW-0255">Endonuclease</keyword>
<keyword id="KW-0269">Exonuclease</keyword>
<keyword id="KW-1035">Host cytoplasm</keyword>
<keyword id="KW-1048">Host nucleus</keyword>
<keyword id="KW-0945">Host-virus interaction</keyword>
<keyword id="KW-0378">Hydrolase</keyword>
<keyword id="KW-0540">Nuclease</keyword>
<keyword id="KW-1185">Reference proteome</keyword>
<accession>Q6UDH6</accession>
<name>AN_PSHV1</name>
<sequence length="520" mass="57806">MSSTRHGGNFQLELAAGTLLPKEMPGINAFTFYDYLLDLAQSGASPESVLSVEPIYHRLAYISRLVAWIDASGFSHGTLPRLFLSTEPPTAEQIKSNLSPSDIEQILFFVESETKQQVGCDLWKVLRQFLLTASTLKWVKNRPCSKPDWFKVNEFRNGGAGYARQAMAITFGLTNESCARKLIMTYVSGDLHRHQNDSGEFFRLDVGESDEDAFSCGLLLDKRSGMLGASMDMAVMRKDPETAAVAEIDVFEIKCRAKYTFCPENLMHPLSACYERMLDSPGEETIRDFLFGIRAPGVEYFPPDSVPSAAEALLTCAKGWASPDAKASTRDRGSLIEKRHLQLNREVRSTVYLFGEPCLKTNSIRPIVWPSGGTSCELPIFINPKHQNFKQIFVQTYVLADYYPDAKISQYLVTFIGRSRRANEFGRVLRLDGGREDLAEPISLDHIHAIPILLIKTPVVIDRDHFSDLSSLGKEAFEFSVKETWGNAADAAAAPRIGRGCAAKKPGPTELLCAPESTQH</sequence>
<evidence type="ECO:0000255" key="1">
    <source>
        <dbReference type="HAMAP-Rule" id="MF_04009"/>
    </source>
</evidence>